<accession>A3D5F8</accession>
<sequence>MTSIEPTHTGKKVIVGMSGGVDSSVSAYLLMQQGYQVEGLFMKNWEEDDNNEYCAAAEDLKDAQAVCDKLGIKLHTVNFAAEYWDNVFEYFLAEYKAGRTPNPDIMCNKEIKFKAFLEFADEILDADYIAMGHYVRRRDNSDGSTQMLRGVDGNKDQSYFLYTLSHEQVARSLFPVGELEKHEVREIAKEMGLITHDKKDSTGICFIGERKFTEFLGTYLPAQPGNIETPEGEVIGTHQGLMYHTLGQRKGLGIGGMKNSNDDPWYVVDKDLERNVLIVGQGGHHPRLMSTGMTVNQLHWVDRTGPVDGCHIAVKTRYRQQDVPCTLTYTDEHTLGVVFDEPVAAVTPGQSAVFYDGEVCLGGGIIDQLIRG</sequence>
<comment type="function">
    <text evidence="1">Catalyzes the 2-thiolation of uridine at the wobble position (U34) of tRNA, leading to the formation of s(2)U34.</text>
</comment>
<comment type="catalytic activity">
    <reaction evidence="1">
        <text>S-sulfanyl-L-cysteinyl-[protein] + uridine(34) in tRNA + AH2 + ATP = 2-thiouridine(34) in tRNA + L-cysteinyl-[protein] + A + AMP + diphosphate + H(+)</text>
        <dbReference type="Rhea" id="RHEA:47032"/>
        <dbReference type="Rhea" id="RHEA-COMP:10131"/>
        <dbReference type="Rhea" id="RHEA-COMP:11726"/>
        <dbReference type="Rhea" id="RHEA-COMP:11727"/>
        <dbReference type="Rhea" id="RHEA-COMP:11728"/>
        <dbReference type="ChEBI" id="CHEBI:13193"/>
        <dbReference type="ChEBI" id="CHEBI:15378"/>
        <dbReference type="ChEBI" id="CHEBI:17499"/>
        <dbReference type="ChEBI" id="CHEBI:29950"/>
        <dbReference type="ChEBI" id="CHEBI:30616"/>
        <dbReference type="ChEBI" id="CHEBI:33019"/>
        <dbReference type="ChEBI" id="CHEBI:61963"/>
        <dbReference type="ChEBI" id="CHEBI:65315"/>
        <dbReference type="ChEBI" id="CHEBI:87170"/>
        <dbReference type="ChEBI" id="CHEBI:456215"/>
        <dbReference type="EC" id="2.8.1.13"/>
    </reaction>
</comment>
<comment type="subcellular location">
    <subcellularLocation>
        <location evidence="1">Cytoplasm</location>
    </subcellularLocation>
</comment>
<comment type="similarity">
    <text evidence="1">Belongs to the MnmA/TRMU family.</text>
</comment>
<comment type="sequence caution" evidence="2">
    <conflict type="erroneous initiation">
        <sequence resource="EMBL-CDS" id="ABN61971"/>
    </conflict>
</comment>
<name>MNMA_SHEB5</name>
<reference key="1">
    <citation type="submission" date="2007-02" db="EMBL/GenBank/DDBJ databases">
        <title>Complete sequence of chromosome of Shewanella baltica OS155.</title>
        <authorList>
            <consortium name="US DOE Joint Genome Institute"/>
            <person name="Copeland A."/>
            <person name="Lucas S."/>
            <person name="Lapidus A."/>
            <person name="Barry K."/>
            <person name="Detter J.C."/>
            <person name="Glavina del Rio T."/>
            <person name="Hammon N."/>
            <person name="Israni S."/>
            <person name="Dalin E."/>
            <person name="Tice H."/>
            <person name="Pitluck S."/>
            <person name="Sims D.R."/>
            <person name="Brettin T."/>
            <person name="Bruce D."/>
            <person name="Han C."/>
            <person name="Tapia R."/>
            <person name="Brainard J."/>
            <person name="Schmutz J."/>
            <person name="Larimer F."/>
            <person name="Land M."/>
            <person name="Hauser L."/>
            <person name="Kyrpides N."/>
            <person name="Mikhailova N."/>
            <person name="Brettar I."/>
            <person name="Klappenbach J."/>
            <person name="Konstantinidis K."/>
            <person name="Rodrigues J."/>
            <person name="Tiedje J."/>
            <person name="Richardson P."/>
        </authorList>
    </citation>
    <scope>NUCLEOTIDE SEQUENCE [LARGE SCALE GENOMIC DNA]</scope>
    <source>
        <strain>OS155 / ATCC BAA-1091</strain>
    </source>
</reference>
<evidence type="ECO:0000255" key="1">
    <source>
        <dbReference type="HAMAP-Rule" id="MF_00144"/>
    </source>
</evidence>
<evidence type="ECO:0000305" key="2"/>
<dbReference type="EC" id="2.8.1.13" evidence="1"/>
<dbReference type="EMBL" id="CP000563">
    <property type="protein sequence ID" value="ABN61971.1"/>
    <property type="status" value="ALT_INIT"/>
    <property type="molecule type" value="Genomic_DNA"/>
</dbReference>
<dbReference type="RefSeq" id="WP_012587474.1">
    <property type="nucleotide sequence ID" value="NC_009052.1"/>
</dbReference>
<dbReference type="SMR" id="A3D5F8"/>
<dbReference type="STRING" id="325240.Sbal_2478"/>
<dbReference type="KEGG" id="sbl:Sbal_2478"/>
<dbReference type="HOGENOM" id="CLU_035188_1_0_6"/>
<dbReference type="OrthoDB" id="9800696at2"/>
<dbReference type="Proteomes" id="UP000001557">
    <property type="component" value="Chromosome"/>
</dbReference>
<dbReference type="GO" id="GO:0005737">
    <property type="term" value="C:cytoplasm"/>
    <property type="evidence" value="ECO:0007669"/>
    <property type="project" value="UniProtKB-SubCell"/>
</dbReference>
<dbReference type="GO" id="GO:0005524">
    <property type="term" value="F:ATP binding"/>
    <property type="evidence" value="ECO:0007669"/>
    <property type="project" value="UniProtKB-KW"/>
</dbReference>
<dbReference type="GO" id="GO:0000049">
    <property type="term" value="F:tRNA binding"/>
    <property type="evidence" value="ECO:0007669"/>
    <property type="project" value="UniProtKB-KW"/>
</dbReference>
<dbReference type="GO" id="GO:0103016">
    <property type="term" value="F:tRNA-uridine 2-sulfurtransferase activity"/>
    <property type="evidence" value="ECO:0007669"/>
    <property type="project" value="UniProtKB-EC"/>
</dbReference>
<dbReference type="GO" id="GO:0002143">
    <property type="term" value="P:tRNA wobble position uridine thiolation"/>
    <property type="evidence" value="ECO:0007669"/>
    <property type="project" value="TreeGrafter"/>
</dbReference>
<dbReference type="CDD" id="cd01998">
    <property type="entry name" value="MnmA_TRMU-like"/>
    <property type="match status" value="1"/>
</dbReference>
<dbReference type="FunFam" id="2.30.30.280:FF:000001">
    <property type="entry name" value="tRNA-specific 2-thiouridylase MnmA"/>
    <property type="match status" value="1"/>
</dbReference>
<dbReference type="FunFam" id="2.40.30.10:FF:000023">
    <property type="entry name" value="tRNA-specific 2-thiouridylase MnmA"/>
    <property type="match status" value="1"/>
</dbReference>
<dbReference type="FunFam" id="3.40.50.620:FF:000004">
    <property type="entry name" value="tRNA-specific 2-thiouridylase MnmA"/>
    <property type="match status" value="1"/>
</dbReference>
<dbReference type="Gene3D" id="2.30.30.280">
    <property type="entry name" value="Adenine nucleotide alpha hydrolases-like domains"/>
    <property type="match status" value="1"/>
</dbReference>
<dbReference type="Gene3D" id="3.40.50.620">
    <property type="entry name" value="HUPs"/>
    <property type="match status" value="1"/>
</dbReference>
<dbReference type="Gene3D" id="2.40.30.10">
    <property type="entry name" value="Translation factors"/>
    <property type="match status" value="1"/>
</dbReference>
<dbReference type="HAMAP" id="MF_00144">
    <property type="entry name" value="tRNA_thiouridyl_MnmA"/>
    <property type="match status" value="1"/>
</dbReference>
<dbReference type="InterPro" id="IPR004506">
    <property type="entry name" value="MnmA-like"/>
</dbReference>
<dbReference type="InterPro" id="IPR046885">
    <property type="entry name" value="MnmA-like_C"/>
</dbReference>
<dbReference type="InterPro" id="IPR046884">
    <property type="entry name" value="MnmA-like_central"/>
</dbReference>
<dbReference type="InterPro" id="IPR023382">
    <property type="entry name" value="MnmA-like_central_sf"/>
</dbReference>
<dbReference type="InterPro" id="IPR014729">
    <property type="entry name" value="Rossmann-like_a/b/a_fold"/>
</dbReference>
<dbReference type="NCBIfam" id="NF001138">
    <property type="entry name" value="PRK00143.1"/>
    <property type="match status" value="1"/>
</dbReference>
<dbReference type="NCBIfam" id="TIGR00420">
    <property type="entry name" value="trmU"/>
    <property type="match status" value="1"/>
</dbReference>
<dbReference type="PANTHER" id="PTHR11933:SF5">
    <property type="entry name" value="MITOCHONDRIAL TRNA-SPECIFIC 2-THIOURIDYLASE 1"/>
    <property type="match status" value="1"/>
</dbReference>
<dbReference type="PANTHER" id="PTHR11933">
    <property type="entry name" value="TRNA 5-METHYLAMINOMETHYL-2-THIOURIDYLATE -METHYLTRANSFERASE"/>
    <property type="match status" value="1"/>
</dbReference>
<dbReference type="Pfam" id="PF03054">
    <property type="entry name" value="tRNA_Me_trans"/>
    <property type="match status" value="1"/>
</dbReference>
<dbReference type="Pfam" id="PF20258">
    <property type="entry name" value="tRNA_Me_trans_C"/>
    <property type="match status" value="1"/>
</dbReference>
<dbReference type="Pfam" id="PF20259">
    <property type="entry name" value="tRNA_Me_trans_M"/>
    <property type="match status" value="1"/>
</dbReference>
<dbReference type="SUPFAM" id="SSF52402">
    <property type="entry name" value="Adenine nucleotide alpha hydrolases-like"/>
    <property type="match status" value="1"/>
</dbReference>
<keyword id="KW-0067">ATP-binding</keyword>
<keyword id="KW-0963">Cytoplasm</keyword>
<keyword id="KW-1015">Disulfide bond</keyword>
<keyword id="KW-0547">Nucleotide-binding</keyword>
<keyword id="KW-1185">Reference proteome</keyword>
<keyword id="KW-0694">RNA-binding</keyword>
<keyword id="KW-0808">Transferase</keyword>
<keyword id="KW-0819">tRNA processing</keyword>
<keyword id="KW-0820">tRNA-binding</keyword>
<gene>
    <name evidence="1" type="primary">mnmA</name>
    <name type="ordered locus">Sbal_2478</name>
</gene>
<feature type="chain" id="PRO_0000349789" description="tRNA-specific 2-thiouridylase MnmA">
    <location>
        <begin position="1"/>
        <end position="372"/>
    </location>
</feature>
<feature type="region of interest" description="Interaction with target base in tRNA" evidence="1">
    <location>
        <begin position="102"/>
        <end position="104"/>
    </location>
</feature>
<feature type="region of interest" description="Interaction with tRNA" evidence="1">
    <location>
        <begin position="155"/>
        <end position="157"/>
    </location>
</feature>
<feature type="region of interest" description="Interaction with tRNA" evidence="1">
    <location>
        <begin position="317"/>
        <end position="318"/>
    </location>
</feature>
<feature type="active site" description="Nucleophile" evidence="1">
    <location>
        <position position="107"/>
    </location>
</feature>
<feature type="active site" description="Cysteine persulfide intermediate" evidence="1">
    <location>
        <position position="205"/>
    </location>
</feature>
<feature type="binding site" evidence="1">
    <location>
        <begin position="16"/>
        <end position="23"/>
    </location>
    <ligand>
        <name>ATP</name>
        <dbReference type="ChEBI" id="CHEBI:30616"/>
    </ligand>
</feature>
<feature type="binding site" evidence="1">
    <location>
        <position position="42"/>
    </location>
    <ligand>
        <name>ATP</name>
        <dbReference type="ChEBI" id="CHEBI:30616"/>
    </ligand>
</feature>
<feature type="binding site" evidence="1">
    <location>
        <position position="132"/>
    </location>
    <ligand>
        <name>ATP</name>
        <dbReference type="ChEBI" id="CHEBI:30616"/>
    </ligand>
</feature>
<feature type="site" description="Interaction with tRNA" evidence="1">
    <location>
        <position position="133"/>
    </location>
</feature>
<feature type="site" description="Interaction with tRNA" evidence="1">
    <location>
        <position position="350"/>
    </location>
</feature>
<feature type="disulfide bond" description="Alternate" evidence="1">
    <location>
        <begin position="107"/>
        <end position="205"/>
    </location>
</feature>
<proteinExistence type="inferred from homology"/>
<protein>
    <recommendedName>
        <fullName evidence="1">tRNA-specific 2-thiouridylase MnmA</fullName>
        <ecNumber evidence="1">2.8.1.13</ecNumber>
    </recommendedName>
</protein>
<organism>
    <name type="scientific">Shewanella baltica (strain OS155 / ATCC BAA-1091)</name>
    <dbReference type="NCBI Taxonomy" id="325240"/>
    <lineage>
        <taxon>Bacteria</taxon>
        <taxon>Pseudomonadati</taxon>
        <taxon>Pseudomonadota</taxon>
        <taxon>Gammaproteobacteria</taxon>
        <taxon>Alteromonadales</taxon>
        <taxon>Shewanellaceae</taxon>
        <taxon>Shewanella</taxon>
    </lineage>
</organism>